<evidence type="ECO:0000255" key="1">
    <source>
        <dbReference type="HAMAP-Rule" id="MF_01370"/>
    </source>
</evidence>
<dbReference type="EMBL" id="CP001287">
    <property type="protein sequence ID" value="ACK65276.1"/>
    <property type="molecule type" value="Genomic_DNA"/>
</dbReference>
<dbReference type="RefSeq" id="WP_012594550.1">
    <property type="nucleotide sequence ID" value="NC_011726.1"/>
</dbReference>
<dbReference type="SMR" id="B7K2E0"/>
<dbReference type="STRING" id="41431.PCC8801_1209"/>
<dbReference type="KEGG" id="cyp:PCC8801_1209"/>
<dbReference type="eggNOG" id="ENOG5031GDS">
    <property type="taxonomic scope" value="Bacteria"/>
</dbReference>
<dbReference type="HOGENOM" id="CLU_137323_1_0_3"/>
<dbReference type="OrthoDB" id="559598at2"/>
<dbReference type="Proteomes" id="UP000008204">
    <property type="component" value="Chromosome"/>
</dbReference>
<dbReference type="GO" id="GO:0009654">
    <property type="term" value="C:photosystem II oxygen evolving complex"/>
    <property type="evidence" value="ECO:0007669"/>
    <property type="project" value="InterPro"/>
</dbReference>
<dbReference type="GO" id="GO:0031676">
    <property type="term" value="C:plasma membrane-derived thylakoid membrane"/>
    <property type="evidence" value="ECO:0007669"/>
    <property type="project" value="UniProtKB-SubCell"/>
</dbReference>
<dbReference type="GO" id="GO:0015979">
    <property type="term" value="P:photosynthesis"/>
    <property type="evidence" value="ECO:0007669"/>
    <property type="project" value="UniProtKB-UniRule"/>
</dbReference>
<dbReference type="Gene3D" id="2.40.30.220">
    <property type="entry name" value="Photosystem II Psb28"/>
    <property type="match status" value="1"/>
</dbReference>
<dbReference type="HAMAP" id="MF_01370">
    <property type="entry name" value="PSII_Psb28"/>
    <property type="match status" value="1"/>
</dbReference>
<dbReference type="InterPro" id="IPR038676">
    <property type="entry name" value="Psb28_c1_sf"/>
</dbReference>
<dbReference type="InterPro" id="IPR005610">
    <property type="entry name" value="PSII_Psb28_class-1"/>
</dbReference>
<dbReference type="NCBIfam" id="TIGR03047">
    <property type="entry name" value="PS_II_psb28"/>
    <property type="match status" value="1"/>
</dbReference>
<dbReference type="PANTHER" id="PTHR34963">
    <property type="match status" value="1"/>
</dbReference>
<dbReference type="PANTHER" id="PTHR34963:SF2">
    <property type="entry name" value="PHOTOSYSTEM II REACTION CENTER PSB28 PROTEIN, CHLOROPLASTIC"/>
    <property type="match status" value="1"/>
</dbReference>
<dbReference type="Pfam" id="PF03912">
    <property type="entry name" value="Psb28"/>
    <property type="match status" value="1"/>
</dbReference>
<proteinExistence type="inferred from homology"/>
<sequence>MAQIQFSRGVAEPVIPDVRLTRSRSGQSGTATFYFREPSIFNSESTDEVTGMYLVDEEGEITTTEVKGKFINGKATDIEAILIMRSPEEWDRFMRFMERYAKEQGLEFSQAGQS</sequence>
<reference key="1">
    <citation type="journal article" date="2011" name="MBio">
        <title>Novel metabolic attributes of the genus Cyanothece, comprising a group of unicellular nitrogen-fixing Cyanobacteria.</title>
        <authorList>
            <person name="Bandyopadhyay A."/>
            <person name="Elvitigala T."/>
            <person name="Welsh E."/>
            <person name="Stockel J."/>
            <person name="Liberton M."/>
            <person name="Min H."/>
            <person name="Sherman L.A."/>
            <person name="Pakrasi H.B."/>
        </authorList>
    </citation>
    <scope>NUCLEOTIDE SEQUENCE [LARGE SCALE GENOMIC DNA]</scope>
    <source>
        <strain>PCC 8801 / RF-1</strain>
    </source>
</reference>
<gene>
    <name evidence="1" type="primary">psb28</name>
    <name type="ordered locus">PCC8801_1209</name>
</gene>
<name>PSB28_RIPO1</name>
<feature type="chain" id="PRO_1000144630" description="Photosystem II reaction center Psb28 protein">
    <location>
        <begin position="1"/>
        <end position="114"/>
    </location>
</feature>
<organism>
    <name type="scientific">Rippkaea orientalis (strain PCC 8801 / RF-1)</name>
    <name type="common">Cyanothece sp. (strain PCC 8801)</name>
    <dbReference type="NCBI Taxonomy" id="41431"/>
    <lineage>
        <taxon>Bacteria</taxon>
        <taxon>Bacillati</taxon>
        <taxon>Cyanobacteriota</taxon>
        <taxon>Cyanophyceae</taxon>
        <taxon>Oscillatoriophycideae</taxon>
        <taxon>Chroococcales</taxon>
        <taxon>Aphanothecaceae</taxon>
        <taxon>Rippkaea</taxon>
        <taxon>Rippkaea orientalis</taxon>
    </lineage>
</organism>
<accession>B7K2E0</accession>
<keyword id="KW-0472">Membrane</keyword>
<keyword id="KW-0602">Photosynthesis</keyword>
<keyword id="KW-0604">Photosystem II</keyword>
<keyword id="KW-1185">Reference proteome</keyword>
<keyword id="KW-0793">Thylakoid</keyword>
<protein>
    <recommendedName>
        <fullName evidence="1">Photosystem II reaction center Psb28 protein</fullName>
    </recommendedName>
    <alternativeName>
        <fullName evidence="1">Photosystem II 13 kDa protein</fullName>
    </alternativeName>
    <alternativeName>
        <fullName evidence="1">Photosystem II reaction center W protein</fullName>
    </alternativeName>
</protein>
<comment type="subunit">
    <text evidence="1">Part of the photosystem II complex.</text>
</comment>
<comment type="subcellular location">
    <subcellularLocation>
        <location evidence="1">Cellular thylakoid membrane</location>
        <topology evidence="1">Peripheral membrane protein</topology>
        <orientation evidence="1">Cytoplasmic side</orientation>
    </subcellularLocation>
</comment>
<comment type="similarity">
    <text evidence="1">Belongs to the Psb28 family.</text>
</comment>